<reference key="1">
    <citation type="journal article" date="2000" name="Vet. Immunol. Immunopathol.">
        <title>Cloning of bovine low molecular weight GTPases (Rac1 and Rac2) and Rho GDP-dissociation inhibitor 2 (D4-GDI).</title>
        <authorList>
            <person name="Davis A.R."/>
            <person name="Clements M.K."/>
            <person name="Bunger P.L."/>
            <person name="Siemsen D.W."/>
            <person name="Quinn M.T."/>
        </authorList>
    </citation>
    <scope>NUCLEOTIDE SEQUENCE [MRNA]</scope>
</reference>
<reference key="2">
    <citation type="submission" date="2005-08" db="EMBL/GenBank/DDBJ databases">
        <authorList>
            <consortium name="NIH - Mammalian Gene Collection (MGC) project"/>
        </authorList>
    </citation>
    <scope>NUCLEOTIDE SEQUENCE [LARGE SCALE MRNA]</scope>
    <source>
        <strain>Hereford</strain>
        <tissue>Thymus</tissue>
    </source>
</reference>
<reference key="3">
    <citation type="journal article" date="1998" name="J. Biol. Chem.">
        <title>p140Sra-1 (specifically Rac1-associated protein) is a novel specific target for Rac1 small GTPase.</title>
        <authorList>
            <person name="Kobayashi K."/>
            <person name="Kuroda S."/>
            <person name="Fukata M."/>
            <person name="Nakamura T."/>
            <person name="Nagase T."/>
            <person name="Nomura N."/>
            <person name="Matsuura Y."/>
            <person name="Yoshida-Kubomura N."/>
            <person name="Iwamatsu A."/>
            <person name="Kaibuchi K."/>
        </authorList>
    </citation>
    <scope>INTERACTION WITH CYFIP1</scope>
</reference>
<name>RAC1_BOVIN</name>
<evidence type="ECO:0000250" key="1">
    <source>
        <dbReference type="UniProtKB" id="P63000"/>
    </source>
</evidence>
<evidence type="ECO:0000250" key="2">
    <source>
        <dbReference type="UniProtKB" id="P63001"/>
    </source>
</evidence>
<evidence type="ECO:0000250" key="3">
    <source>
        <dbReference type="UniProtKB" id="Q6RUV5"/>
    </source>
</evidence>
<evidence type="ECO:0000255" key="4"/>
<evidence type="ECO:0000305" key="5"/>
<dbReference type="EC" id="3.6.5.2" evidence="1"/>
<dbReference type="EMBL" id="AF175262">
    <property type="protein sequence ID" value="AAF00714.1"/>
    <property type="molecule type" value="mRNA"/>
</dbReference>
<dbReference type="EMBL" id="BC103061">
    <property type="protein sequence ID" value="AAI03062.1"/>
    <property type="molecule type" value="mRNA"/>
</dbReference>
<dbReference type="RefSeq" id="NP_776588.1">
    <property type="nucleotide sequence ID" value="NM_174163.2"/>
</dbReference>
<dbReference type="BMRB" id="P62998"/>
<dbReference type="SMR" id="P62998"/>
<dbReference type="FunCoup" id="P62998">
    <property type="interactions" value="3486"/>
</dbReference>
<dbReference type="IntAct" id="P62998">
    <property type="interactions" value="1"/>
</dbReference>
<dbReference type="STRING" id="9913.ENSBTAP00000067666"/>
<dbReference type="SwissPalm" id="P62998"/>
<dbReference type="PaxDb" id="9913-ENSBTAP00000012170"/>
<dbReference type="PeptideAtlas" id="P62998"/>
<dbReference type="GeneID" id="281440"/>
<dbReference type="KEGG" id="bta:281440"/>
<dbReference type="CTD" id="5879"/>
<dbReference type="eggNOG" id="KOG0393">
    <property type="taxonomic scope" value="Eukaryota"/>
</dbReference>
<dbReference type="HOGENOM" id="CLU_041217_21_3_1"/>
<dbReference type="InParanoid" id="P62998"/>
<dbReference type="OrthoDB" id="8830751at2759"/>
<dbReference type="Proteomes" id="UP000009136">
    <property type="component" value="Unplaced"/>
</dbReference>
<dbReference type="GO" id="GO:0042995">
    <property type="term" value="C:cell projection"/>
    <property type="evidence" value="ECO:0000318"/>
    <property type="project" value="GO_Central"/>
</dbReference>
<dbReference type="GO" id="GO:0031410">
    <property type="term" value="C:cytoplasmic vesicle"/>
    <property type="evidence" value="ECO:0000318"/>
    <property type="project" value="GO_Central"/>
</dbReference>
<dbReference type="GO" id="GO:0005856">
    <property type="term" value="C:cytoskeleton"/>
    <property type="evidence" value="ECO:0000318"/>
    <property type="project" value="GO_Central"/>
</dbReference>
<dbReference type="GO" id="GO:0005829">
    <property type="term" value="C:cytosol"/>
    <property type="evidence" value="ECO:0000250"/>
    <property type="project" value="UniProtKB"/>
</dbReference>
<dbReference type="GO" id="GO:0030425">
    <property type="term" value="C:dendrite"/>
    <property type="evidence" value="ECO:0007669"/>
    <property type="project" value="UniProtKB-SubCell"/>
</dbReference>
<dbReference type="GO" id="GO:0030027">
    <property type="term" value="C:lamellipodium"/>
    <property type="evidence" value="ECO:0000250"/>
    <property type="project" value="UniProtKB"/>
</dbReference>
<dbReference type="GO" id="GO:0042470">
    <property type="term" value="C:melanosome"/>
    <property type="evidence" value="ECO:0007669"/>
    <property type="project" value="UniProtKB-SubCell"/>
</dbReference>
<dbReference type="GO" id="GO:0016020">
    <property type="term" value="C:membrane"/>
    <property type="evidence" value="ECO:0000250"/>
    <property type="project" value="UniProtKB"/>
</dbReference>
<dbReference type="GO" id="GO:0005634">
    <property type="term" value="C:nucleus"/>
    <property type="evidence" value="ECO:0000250"/>
    <property type="project" value="UniProtKB"/>
</dbReference>
<dbReference type="GO" id="GO:0005886">
    <property type="term" value="C:plasma membrane"/>
    <property type="evidence" value="ECO:0000318"/>
    <property type="project" value="GO_Central"/>
</dbReference>
<dbReference type="GO" id="GO:0045202">
    <property type="term" value="C:synapse"/>
    <property type="evidence" value="ECO:0007669"/>
    <property type="project" value="UniProtKB-SubCell"/>
</dbReference>
<dbReference type="GO" id="GO:0003925">
    <property type="term" value="F:G protein activity"/>
    <property type="evidence" value="ECO:0007669"/>
    <property type="project" value="UniProtKB-EC"/>
</dbReference>
<dbReference type="GO" id="GO:0005525">
    <property type="term" value="F:GTP binding"/>
    <property type="evidence" value="ECO:0000250"/>
    <property type="project" value="UniProtKB"/>
</dbReference>
<dbReference type="GO" id="GO:0003924">
    <property type="term" value="F:GTPase activity"/>
    <property type="evidence" value="ECO:0000318"/>
    <property type="project" value="GO_Central"/>
</dbReference>
<dbReference type="GO" id="GO:0019901">
    <property type="term" value="F:protein kinase binding"/>
    <property type="evidence" value="ECO:0000318"/>
    <property type="project" value="GO_Central"/>
</dbReference>
<dbReference type="GO" id="GO:0051022">
    <property type="term" value="F:Rho GDP-dissociation inhibitor binding"/>
    <property type="evidence" value="ECO:0000250"/>
    <property type="project" value="UniProtKB"/>
</dbReference>
<dbReference type="GO" id="GO:0007015">
    <property type="term" value="P:actin filament organization"/>
    <property type="evidence" value="ECO:0000250"/>
    <property type="project" value="UniProtKB"/>
</dbReference>
<dbReference type="GO" id="GO:0060326">
    <property type="term" value="P:cell chemotaxis"/>
    <property type="evidence" value="ECO:0000318"/>
    <property type="project" value="GO_Central"/>
</dbReference>
<dbReference type="GO" id="GO:0048870">
    <property type="term" value="P:cell motility"/>
    <property type="evidence" value="ECO:0000250"/>
    <property type="project" value="UniProtKB"/>
</dbReference>
<dbReference type="GO" id="GO:0030031">
    <property type="term" value="P:cell projection assembly"/>
    <property type="evidence" value="ECO:0000318"/>
    <property type="project" value="GO_Central"/>
</dbReference>
<dbReference type="GO" id="GO:0030865">
    <property type="term" value="P:cortical cytoskeleton organization"/>
    <property type="evidence" value="ECO:0000318"/>
    <property type="project" value="GO_Central"/>
</dbReference>
<dbReference type="GO" id="GO:0007163">
    <property type="term" value="P:establishment or maintenance of cell polarity"/>
    <property type="evidence" value="ECO:0000318"/>
    <property type="project" value="GO_Central"/>
</dbReference>
<dbReference type="GO" id="GO:0008045">
    <property type="term" value="P:motor neuron axon guidance"/>
    <property type="evidence" value="ECO:0000318"/>
    <property type="project" value="GO_Central"/>
</dbReference>
<dbReference type="GO" id="GO:0001764">
    <property type="term" value="P:neuron migration"/>
    <property type="evidence" value="ECO:0000250"/>
    <property type="project" value="UniProtKB"/>
</dbReference>
<dbReference type="GO" id="GO:1903348">
    <property type="term" value="P:positive regulation of bicellular tight junction assembly"/>
    <property type="evidence" value="ECO:0000250"/>
    <property type="project" value="UniProtKB"/>
</dbReference>
<dbReference type="GO" id="GO:0001934">
    <property type="term" value="P:positive regulation of protein phosphorylation"/>
    <property type="evidence" value="ECO:0000250"/>
    <property type="project" value="UniProtKB"/>
</dbReference>
<dbReference type="GO" id="GO:0016601">
    <property type="term" value="P:Rac protein signal transduction"/>
    <property type="evidence" value="ECO:0000318"/>
    <property type="project" value="GO_Central"/>
</dbReference>
<dbReference type="GO" id="GO:0032956">
    <property type="term" value="P:regulation of actin cytoskeleton organization"/>
    <property type="evidence" value="ECO:0000318"/>
    <property type="project" value="GO_Central"/>
</dbReference>
<dbReference type="GO" id="GO:0030334">
    <property type="term" value="P:regulation of cell migration"/>
    <property type="evidence" value="ECO:0000250"/>
    <property type="project" value="UniProtKB"/>
</dbReference>
<dbReference type="GO" id="GO:0008360">
    <property type="term" value="P:regulation of cell shape"/>
    <property type="evidence" value="ECO:0000318"/>
    <property type="project" value="GO_Central"/>
</dbReference>
<dbReference type="GO" id="GO:1902622">
    <property type="term" value="P:regulation of neutrophil migration"/>
    <property type="evidence" value="ECO:0000318"/>
    <property type="project" value="GO_Central"/>
</dbReference>
<dbReference type="GO" id="GO:0071526">
    <property type="term" value="P:semaphorin-plexin signaling pathway"/>
    <property type="evidence" value="ECO:0000250"/>
    <property type="project" value="UniProtKB"/>
</dbReference>
<dbReference type="CDD" id="cd01871">
    <property type="entry name" value="Rac1_like"/>
    <property type="match status" value="1"/>
</dbReference>
<dbReference type="FunFam" id="3.40.50.300:FF:000088">
    <property type="entry name" value="Ras-related C3 botulinum toxin substrate 1"/>
    <property type="match status" value="1"/>
</dbReference>
<dbReference type="Gene3D" id="3.40.50.300">
    <property type="entry name" value="P-loop containing nucleotide triphosphate hydrolases"/>
    <property type="match status" value="1"/>
</dbReference>
<dbReference type="InterPro" id="IPR027417">
    <property type="entry name" value="P-loop_NTPase"/>
</dbReference>
<dbReference type="InterPro" id="IPR005225">
    <property type="entry name" value="Small_GTP-bd"/>
</dbReference>
<dbReference type="InterPro" id="IPR001806">
    <property type="entry name" value="Small_GTPase"/>
</dbReference>
<dbReference type="InterPro" id="IPR003578">
    <property type="entry name" value="Small_GTPase_Rho"/>
</dbReference>
<dbReference type="NCBIfam" id="TIGR00231">
    <property type="entry name" value="small_GTP"/>
    <property type="match status" value="1"/>
</dbReference>
<dbReference type="PANTHER" id="PTHR24072">
    <property type="entry name" value="RHO FAMILY GTPASE"/>
    <property type="match status" value="1"/>
</dbReference>
<dbReference type="Pfam" id="PF00071">
    <property type="entry name" value="Ras"/>
    <property type="match status" value="1"/>
</dbReference>
<dbReference type="PRINTS" id="PR00449">
    <property type="entry name" value="RASTRNSFRMNG"/>
</dbReference>
<dbReference type="SMART" id="SM00175">
    <property type="entry name" value="RAB"/>
    <property type="match status" value="1"/>
</dbReference>
<dbReference type="SMART" id="SM00173">
    <property type="entry name" value="RAS"/>
    <property type="match status" value="1"/>
</dbReference>
<dbReference type="SMART" id="SM00174">
    <property type="entry name" value="RHO"/>
    <property type="match status" value="1"/>
</dbReference>
<dbReference type="SUPFAM" id="SSF52540">
    <property type="entry name" value="P-loop containing nucleoside triphosphate hydrolases"/>
    <property type="match status" value="1"/>
</dbReference>
<dbReference type="PROSITE" id="PS51420">
    <property type="entry name" value="RHO"/>
    <property type="match status" value="1"/>
</dbReference>
<sequence length="192" mass="21450">MQAIKCVVVGDGAVGKTCLLISYTTNAFPGEYIPTVFDNYSANVMVDGKPVNLGLWDTAGQEDYDRLRPLSYPQTDVFLICFSLVSPASFENVRAKWYPEVRHHCPNTPIILVGTKLDLRDDKDTIEKLKEKKLTPITYPQGLAMAKEIGAVKYLECSALTQRGLKTVFDEAIRAVLCPPPVKKRKRKCLLL</sequence>
<organism>
    <name type="scientific">Bos taurus</name>
    <name type="common">Bovine</name>
    <dbReference type="NCBI Taxonomy" id="9913"/>
    <lineage>
        <taxon>Eukaryota</taxon>
        <taxon>Metazoa</taxon>
        <taxon>Chordata</taxon>
        <taxon>Craniata</taxon>
        <taxon>Vertebrata</taxon>
        <taxon>Euteleostomi</taxon>
        <taxon>Mammalia</taxon>
        <taxon>Eutheria</taxon>
        <taxon>Laurasiatheria</taxon>
        <taxon>Artiodactyla</taxon>
        <taxon>Ruminantia</taxon>
        <taxon>Pecora</taxon>
        <taxon>Bovidae</taxon>
        <taxon>Bovinae</taxon>
        <taxon>Bos</taxon>
    </lineage>
</organism>
<gene>
    <name evidence="1" type="primary">RAC1</name>
</gene>
<keyword id="KW-1003">Cell membrane</keyword>
<keyword id="KW-0966">Cell projection</keyword>
<keyword id="KW-0963">Cytoplasm</keyword>
<keyword id="KW-0342">GTP-binding</keyword>
<keyword id="KW-0378">Hydrolase</keyword>
<keyword id="KW-1017">Isopeptide bond</keyword>
<keyword id="KW-0449">Lipoprotein</keyword>
<keyword id="KW-0472">Membrane</keyword>
<keyword id="KW-0488">Methylation</keyword>
<keyword id="KW-0547">Nucleotide-binding</keyword>
<keyword id="KW-0539">Nucleus</keyword>
<keyword id="KW-0597">Phosphoprotein</keyword>
<keyword id="KW-0636">Prenylation</keyword>
<keyword id="KW-1185">Reference proteome</keyword>
<keyword id="KW-0770">Synapse</keyword>
<keyword id="KW-0832">Ubl conjugation</keyword>
<comment type="function">
    <text evidence="1 2 3">Plasma membrane-associated small GTPase which cycles between active GTP-bound and inactive GDP-bound states. In its active state, binds to a variety of effector proteins to regulate cellular responses such as secretory processes, phagocytosis of apoptotic cells, epithelial cell polarization, neurons adhesion, migration and differentiation, and growth-factor induced formation of membrane ruffles. Rac1 p21/rho GDI heterodimer is the active component of the cytosolic factor sigma 1, which is involved in stimulation of the NADPH oxidase activity in macrophages. Essential for the SPATA13-mediated regulation of cell migration and adhesion assembly and disassembly. Stimulates PKN2 kinase activity. In concert with RAB7A, plays a role in regulating the formation of RBs (ruffled borders) in osteoclasts. In podocytes, promotes nuclear shuttling of NR3C2; this modulation is required for a proper kidney functioning. Required for atypical chemokine receptor ACKR2-induced LIMK1-PAK1-dependent phosphorylation of cofilin (CFL1) and for up-regulation of ACKR2 from endosomal compartment to cell membrane, increasing its efficiency in chemokine uptake and degradation (By similarity). In neurons, is involved in dendritic spine formation and synaptic plasticity (By similarity). In hippocampal neurons, involved in spine morphogenesis and synapse formation, through local activation at synapses by guanine nucleotide exchange factors (GEFs), such as ARHGEF6/ARHGEF7/PIX (By similarity). In synapses, seems to mediate the regulation of F-actin cluster formation performed by SHANK3 (By similarity). In neurons, plays a crucial role in regulating GABA(A) receptor synaptic stability and hence GABAergic inhibitory synaptic transmission through its role in PAK1 activation and eventually F-actin stabilization (By similarity). Required for DSG3 translocation to cell-cell junctions, DSG3-mediated organization of cortical F-actin bundles and anchoring of actin at cell junctions; via interaction with DSG3 (By similarity). Subunit of the phagocyte NADPH oxidase complex that mediates the transfer of electrons from cytosolic NADPH to O2 to produce the superoxide anion (O2(-)) (By similarity).</text>
</comment>
<comment type="catalytic activity">
    <reaction evidence="1">
        <text>GTP + H2O = GDP + phosphate + H(+)</text>
        <dbReference type="Rhea" id="RHEA:19669"/>
        <dbReference type="ChEBI" id="CHEBI:15377"/>
        <dbReference type="ChEBI" id="CHEBI:15378"/>
        <dbReference type="ChEBI" id="CHEBI:37565"/>
        <dbReference type="ChEBI" id="CHEBI:43474"/>
        <dbReference type="ChEBI" id="CHEBI:58189"/>
        <dbReference type="EC" id="3.6.5.2"/>
    </reaction>
    <physiologicalReaction direction="left-to-right" evidence="1">
        <dbReference type="Rhea" id="RHEA:19670"/>
    </physiologicalReaction>
</comment>
<comment type="activity regulation">
    <text evidence="1">Regulated by guanine nucleotide exchange factors (GEFs) which promote the exchange of bound GDP for free GTP, GTPase activating proteins (GAPs) which increase the GTP hydrolysis activity, and GDP dissociation inhibitors which inhibit the dissociation of the nucleotide from the GTPase. GTP hydrolysis is stimulated by ARHGAP30.</text>
</comment>
<comment type="subunit">
    <text evidence="1 2">Interacts with NISCH. Interacts with PIP5K1A. Interacts with the GTP-bound form of RAB7A. Interacts with SRGAP2. Interacts with CYFIP1/SRA-1. Interacts with PLXNB3. Interacts with ARHGDIA; the interaction is induced by SEMA5A, mediated through PLXNB3 and inactivates and stabilizes RAC1. Interacts (GTP-bound form preferentially) with PKN2 (via the REM repeats); the interaction stimulates autophosphorylation and phosphorylation of PKN2. Interacts with the GEF proteins PREX1, RASGRF2, FARP1, FARP2, DOCK1, DOCK2 and DOCK7, which promote the exchange between GDP and GTP, and therefore activate it. Interacts with PARD6A, PARD6B and PARD6G in a GTP-dependent manner. Part of a quaternary complex containing PARD3, some PARD6 protein (PARD6A, PARD6B or PARD6G) and some atypical PKC protein (PRKCI or PRKCZ), which plays a central role in epithelial cell polarization. Found in a trimeric complex composed of DOCK1 and ELMO1, which plays a central role in phagocytosis of apoptotic cells. Interacts with RALBP1 via its effector domain. Interacts with PLXNB1. Probably found in a ternary complex composed of DSCAM, PAK1 and RAC1. Interacts with DSCAM; the interaction requires PAK1. Part of a complex with MAP2K3, MAP3K3, CCM2 and DEF6. Interacts with BAIAP2, BAIAP2L1 and DEF6. Interacts with Y.pseudotuberculosis YPKA and PLCB2. Interacts with NOXA1. Interacts with ARHGEF2. Interacts with TBC1D2. Interacts with UNKL. Interacts with USP6. Interacts with SPATA13. Interacts with ARHGEF16; mediates activation of RAC1 by EPHA2. Interacts with ITGB4. Interacts with S100A8 and calprotectin (S100A8/9). Interacts with PACSIN2. Interacts with ITGB1BP1. Interacts with ITGB1BP1. Interacts (when active) with PPP5C (via TPR repeats); activates PPP5C phosphatase activity and translocates PPP5C to the cell membrane. Interacts with RAPH1 (via Ras associating and PH domains) (By similarity). Interacts with MTSS2 (via IMD domain); this interaction may be important to potentiate PDGF-induced RAC1 activation. Interacts with PAK2. Interacts (GTP-bound form) with SH3RF1 and SH3RF3. Found in a complex with SH3RF1, MAPK8IP1/JIP1, MAP3K11/MLK3, MAP2K7/MKK7 and MAPK8/JNK1. Interacts (both active GTP- or inactive GDP-bound forms) with SH3RF2. Interacts (GTP-bound form preferentially) with CYRIB (By similarity). Interacts with DOCK4 (via DOCKER domain); functions as a guanine nucleotide exchange factor (GEF) for RAC1 (By similarity). Interacts with GARRE1 (By similarity). Interacts with RAP1GDS1 (By similarity). Interacts with TNFAIP8L2 (By similarity). May interact with ARHGAP36 (By similarity). Interacts with CD151 and ITGB1 (By similarity). Interacts with DSG3; the interaction is required for DSG3 translocation to cell-cell junctions, organization of cortical F-actin bundles and actin anchoring at cell-cell junctions (By similarity). Component of the phagocyte NADPH oxidase complex composed of an obligatory core heterodimer formed by the membrane proteins CYBA and CYBB and the cytosolic regulatory subunits NCF1/p47-phox, NCF2/p67-phox, NCF4/p40-phox and the small GTPase RAC1 or RAC2. Interacts with NCF2 (By similarity).</text>
</comment>
<comment type="interaction">
    <interactant intactId="EBI-6654511">
        <id>P62998</id>
    </interactant>
    <interactant intactId="EBI-6654424">
        <id>P00442</id>
        <label>SOD1</label>
    </interactant>
    <organismsDiffer>false</organismsDiffer>
    <experiments>2</experiments>
</comment>
<comment type="subcellular location">
    <subcellularLocation>
        <location evidence="1">Cell membrane</location>
        <topology evidence="1">Lipid-anchor</topology>
        <orientation evidence="1">Cytoplasmic side</orientation>
    </subcellularLocation>
    <subcellularLocation>
        <location evidence="1">Melanosome</location>
    </subcellularLocation>
    <subcellularLocation>
        <location evidence="1">Cytoplasm</location>
    </subcellularLocation>
    <subcellularLocation>
        <location evidence="2">Cell projection</location>
        <location evidence="2">Lamellipodium</location>
    </subcellularLocation>
    <subcellularLocation>
        <location evidence="2">Cell projection</location>
        <location evidence="2">Dendrite</location>
    </subcellularLocation>
    <subcellularLocation>
        <location evidence="3">Synapse</location>
    </subcellularLocation>
    <subcellularLocation>
        <location evidence="1">Nucleus</location>
    </subcellularLocation>
    <text evidence="1 2 3">Inner surface of plasma membrane possibly with attachment requiring prenylation of the C-terminal cysteine (By similarity). Found in the ruffled border (a late endosomal-like compartment in the plasma membrane) of bone-resorbing osteoclasts. Localizes to the lamellipodium in a SH3RF1-dependent manner (By similarity). In macrophages, cytoplasmic location increases upon CSF1 stimulation (By similarity). Activation by GTP-binding promotes nuclear localization (By similarity).</text>
</comment>
<comment type="domain">
    <text evidence="1">The effector region mediates interaction with DEF6.</text>
</comment>
<comment type="PTM">
    <text evidence="1">GTP-bound active form is ubiquitinated at Lys-147 by HACE1, leading to its degradation by the proteasome.</text>
</comment>
<comment type="PTM">
    <text evidence="1">Phosphorylated by AKT at Ser-71.</text>
</comment>
<comment type="PTM">
    <text evidence="1">Ubiquitinated at Lys-166 in a FBXL19-mediated manner; leading to proteasomal degradation.</text>
</comment>
<comment type="similarity">
    <text evidence="5">Belongs to the small GTPase superfamily. Rho family.</text>
</comment>
<proteinExistence type="evidence at protein level"/>
<feature type="chain" id="PRO_0000042032" description="Ras-related C3 botulinum toxin substrate 1">
    <location>
        <begin position="1"/>
        <end position="189"/>
    </location>
</feature>
<feature type="propeptide" id="PRO_0000042033" description="Removed in mature form" evidence="1">
    <location>
        <begin position="190"/>
        <end position="192"/>
    </location>
</feature>
<feature type="short sequence motif" description="Effector region" evidence="4">
    <location>
        <begin position="32"/>
        <end position="40"/>
    </location>
</feature>
<feature type="short sequence motif" description="Polybasic region; required for nuclear import" evidence="1">
    <location>
        <begin position="179"/>
        <end position="188"/>
    </location>
</feature>
<feature type="binding site" evidence="1">
    <location>
        <position position="12"/>
    </location>
    <ligand>
        <name>GTP</name>
        <dbReference type="ChEBI" id="CHEBI:37565"/>
    </ligand>
</feature>
<feature type="binding site" evidence="1">
    <location>
        <position position="13"/>
    </location>
    <ligand>
        <name>GTP</name>
        <dbReference type="ChEBI" id="CHEBI:37565"/>
    </ligand>
</feature>
<feature type="binding site" evidence="1">
    <location>
        <position position="14"/>
    </location>
    <ligand>
        <name>GTP</name>
        <dbReference type="ChEBI" id="CHEBI:37565"/>
    </ligand>
</feature>
<feature type="binding site" evidence="1">
    <location>
        <position position="15"/>
    </location>
    <ligand>
        <name>GTP</name>
        <dbReference type="ChEBI" id="CHEBI:37565"/>
    </ligand>
</feature>
<feature type="binding site" evidence="1">
    <location>
        <position position="16"/>
    </location>
    <ligand>
        <name>GTP</name>
        <dbReference type="ChEBI" id="CHEBI:37565"/>
    </ligand>
</feature>
<feature type="binding site" evidence="1">
    <location>
        <position position="17"/>
    </location>
    <ligand>
        <name>GTP</name>
        <dbReference type="ChEBI" id="CHEBI:37565"/>
    </ligand>
</feature>
<feature type="binding site" evidence="1">
    <location>
        <position position="18"/>
    </location>
    <ligand>
        <name>GTP</name>
        <dbReference type="ChEBI" id="CHEBI:37565"/>
    </ligand>
</feature>
<feature type="binding site" evidence="1">
    <location>
        <position position="31"/>
    </location>
    <ligand>
        <name>GTP</name>
        <dbReference type="ChEBI" id="CHEBI:37565"/>
    </ligand>
</feature>
<feature type="binding site" evidence="1">
    <location>
        <position position="32"/>
    </location>
    <ligand>
        <name>GTP</name>
        <dbReference type="ChEBI" id="CHEBI:37565"/>
    </ligand>
</feature>
<feature type="binding site" evidence="1">
    <location>
        <position position="34"/>
    </location>
    <ligand>
        <name>GTP</name>
        <dbReference type="ChEBI" id="CHEBI:37565"/>
    </ligand>
</feature>
<feature type="binding site" evidence="1">
    <location>
        <position position="35"/>
    </location>
    <ligand>
        <name>GTP</name>
        <dbReference type="ChEBI" id="CHEBI:37565"/>
    </ligand>
</feature>
<feature type="binding site" evidence="1">
    <location>
        <position position="59"/>
    </location>
    <ligand>
        <name>GTP</name>
        <dbReference type="ChEBI" id="CHEBI:37565"/>
    </ligand>
</feature>
<feature type="binding site" evidence="1">
    <location>
        <position position="60"/>
    </location>
    <ligand>
        <name>GTP</name>
        <dbReference type="ChEBI" id="CHEBI:37565"/>
    </ligand>
</feature>
<feature type="binding site" evidence="1">
    <location>
        <position position="116"/>
    </location>
    <ligand>
        <name>GTP</name>
        <dbReference type="ChEBI" id="CHEBI:37565"/>
    </ligand>
</feature>
<feature type="binding site" evidence="1">
    <location>
        <position position="118"/>
    </location>
    <ligand>
        <name>GTP</name>
        <dbReference type="ChEBI" id="CHEBI:37565"/>
    </ligand>
</feature>
<feature type="binding site" evidence="1">
    <location>
        <position position="119"/>
    </location>
    <ligand>
        <name>GTP</name>
        <dbReference type="ChEBI" id="CHEBI:37565"/>
    </ligand>
</feature>
<feature type="binding site" evidence="1">
    <location>
        <position position="159"/>
    </location>
    <ligand>
        <name>GTP</name>
        <dbReference type="ChEBI" id="CHEBI:37565"/>
    </ligand>
</feature>
<feature type="binding site" evidence="1">
    <location>
        <position position="160"/>
    </location>
    <ligand>
        <name>GTP</name>
        <dbReference type="ChEBI" id="CHEBI:37565"/>
    </ligand>
</feature>
<feature type="modified residue" description="Phosphoserine" evidence="1">
    <location>
        <position position="71"/>
    </location>
</feature>
<feature type="modified residue" description="Cysteine methyl ester" evidence="1">
    <location>
        <position position="189"/>
    </location>
</feature>
<feature type="lipid moiety-binding region" description="S-geranylgeranyl cysteine" evidence="1">
    <location>
        <position position="189"/>
    </location>
</feature>
<feature type="cross-link" description="Glycyl lysine isopeptide (Lys-Gly) (interchain with G-Cter in ubiquitin)" evidence="1">
    <location>
        <position position="147"/>
    </location>
</feature>
<feature type="cross-link" description="Glycyl lysine isopeptide (Lys-Gly) (interchain with G-Cter in ubiquitin)" evidence="1">
    <location>
        <position position="166"/>
    </location>
</feature>
<protein>
    <recommendedName>
        <fullName evidence="1">Ras-related C3 botulinum toxin substrate 1</fullName>
        <ecNumber evidence="1">3.6.5.2</ecNumber>
    </recommendedName>
    <alternativeName>
        <fullName>p21-Rac1</fullName>
    </alternativeName>
</protein>
<accession>P62998</accession>
<accession>O95501</accession>
<accession>P15154</accession>
<accession>Q3ZBW9</accession>
<accession>Q9BTB4</accession>